<keyword id="KW-0227">DNA damage</keyword>
<keyword id="KW-0233">DNA recombination</keyword>
<keyword id="KW-0234">DNA repair</keyword>
<keyword id="KW-0238">DNA-binding</keyword>
<keyword id="KW-0539">Nucleus</keyword>
<keyword id="KW-0597">Phosphoprotein</keyword>
<keyword id="KW-1185">Reference proteome</keyword>
<proteinExistence type="evidence at protein level"/>
<sequence length="278" mass="31391">MCSDFRRAESGTELLARLEGRSSLKELEPNLFADEDSPVHGDIFEFHGPEGTGKTEMLYHLTARCILPKSEGGLQIEVLFIDTDYHFDMLRLVTVLEHRLSQSSEEAMKLCLARLFLAYCSSSMQLLLTLHSLEALLCSRPSLCLLIVDSLSSFYWIDRVSGGESVALQESTLQKCSQLLERLVTEYRLLLFATTQSLMQKGSDSADGPSSSKHPCDGDMGYRAYLCKAWQRVVKHRVIFSRDDEAKSSRFSLVSRHLKSNSLKKHSFMVRESGVEFC</sequence>
<protein>
    <recommendedName>
        <fullName>DNA repair protein XRCC2</fullName>
    </recommendedName>
    <alternativeName>
        <fullName>X-ray repair cross-complementing protein 2</fullName>
    </alternativeName>
</protein>
<organism>
    <name type="scientific">Mus musculus</name>
    <name type="common">Mouse</name>
    <dbReference type="NCBI Taxonomy" id="10090"/>
    <lineage>
        <taxon>Eukaryota</taxon>
        <taxon>Metazoa</taxon>
        <taxon>Chordata</taxon>
        <taxon>Craniata</taxon>
        <taxon>Vertebrata</taxon>
        <taxon>Euteleostomi</taxon>
        <taxon>Mammalia</taxon>
        <taxon>Eutheria</taxon>
        <taxon>Euarchontoglires</taxon>
        <taxon>Glires</taxon>
        <taxon>Rodentia</taxon>
        <taxon>Myomorpha</taxon>
        <taxon>Muroidea</taxon>
        <taxon>Muridae</taxon>
        <taxon>Murinae</taxon>
        <taxon>Mus</taxon>
        <taxon>Mus</taxon>
    </lineage>
</organism>
<accession>Q9CX47</accession>
<accession>O88730</accession>
<accession>Q9D5T1</accession>
<dbReference type="EMBL" id="Y17040">
    <property type="protein sequence ID" value="CAA76599.1"/>
    <property type="molecule type" value="mRNA"/>
</dbReference>
<dbReference type="EMBL" id="AK020192">
    <property type="protein sequence ID" value="BAB32023.1"/>
    <property type="molecule type" value="mRNA"/>
</dbReference>
<dbReference type="EMBL" id="AK014963">
    <property type="status" value="NOT_ANNOTATED_CDS"/>
    <property type="molecule type" value="mRNA"/>
</dbReference>
<dbReference type="EMBL" id="BC033417">
    <property type="protein sequence ID" value="AAH33417.1"/>
    <property type="molecule type" value="mRNA"/>
</dbReference>
<dbReference type="CCDS" id="CCDS19135.1"/>
<dbReference type="RefSeq" id="NP_065595.2">
    <property type="nucleotide sequence ID" value="NM_020570.2"/>
</dbReference>
<dbReference type="SMR" id="Q9CX47"/>
<dbReference type="BioGRID" id="208291">
    <property type="interactions" value="7"/>
</dbReference>
<dbReference type="FunCoup" id="Q9CX47">
    <property type="interactions" value="1896"/>
</dbReference>
<dbReference type="STRING" id="10090.ENSMUSP00000030773"/>
<dbReference type="PhosphoSitePlus" id="Q9CX47"/>
<dbReference type="PaxDb" id="10090-ENSMUSP00000030773"/>
<dbReference type="ProteomicsDB" id="299723"/>
<dbReference type="Antibodypedia" id="18833">
    <property type="antibodies" value="371 antibodies from 36 providers"/>
</dbReference>
<dbReference type="DNASU" id="57434"/>
<dbReference type="Ensembl" id="ENSMUST00000030773.12">
    <property type="protein sequence ID" value="ENSMUSP00000030773.8"/>
    <property type="gene ID" value="ENSMUSG00000028933.12"/>
</dbReference>
<dbReference type="GeneID" id="57434"/>
<dbReference type="KEGG" id="mmu:57434"/>
<dbReference type="UCSC" id="uc008wta.1">
    <property type="organism name" value="mouse"/>
</dbReference>
<dbReference type="AGR" id="MGI:1927345"/>
<dbReference type="CTD" id="7516"/>
<dbReference type="MGI" id="MGI:1927345">
    <property type="gene designation" value="Xrcc2"/>
</dbReference>
<dbReference type="VEuPathDB" id="HostDB:ENSMUSG00000028933"/>
<dbReference type="eggNOG" id="KOG2859">
    <property type="taxonomic scope" value="Eukaryota"/>
</dbReference>
<dbReference type="GeneTree" id="ENSGT00390000020445"/>
<dbReference type="HOGENOM" id="CLU_059815_1_0_1"/>
<dbReference type="InParanoid" id="Q9CX47"/>
<dbReference type="OMA" id="THRIFFS"/>
<dbReference type="OrthoDB" id="420422at2759"/>
<dbReference type="PhylomeDB" id="Q9CX47"/>
<dbReference type="TreeFam" id="TF101202"/>
<dbReference type="Reactome" id="R-MMU-5685942">
    <property type="pathway name" value="HDR through Homologous Recombination (HRR)"/>
</dbReference>
<dbReference type="Reactome" id="R-MMU-5693568">
    <property type="pathway name" value="Resolution of D-loop Structures through Holliday Junction Intermediates"/>
</dbReference>
<dbReference type="Reactome" id="R-MMU-5693579">
    <property type="pathway name" value="Homologous DNA Pairing and Strand Exchange"/>
</dbReference>
<dbReference type="Reactome" id="R-MMU-5693616">
    <property type="pathway name" value="Presynaptic phase of homologous DNA pairing and strand exchange"/>
</dbReference>
<dbReference type="BioGRID-ORCS" id="57434">
    <property type="hits" value="31 hits in 115 CRISPR screens"/>
</dbReference>
<dbReference type="ChiTaRS" id="Xrcc2">
    <property type="organism name" value="mouse"/>
</dbReference>
<dbReference type="PRO" id="PR:Q9CX47"/>
<dbReference type="Proteomes" id="UP000000589">
    <property type="component" value="Chromosome 5"/>
</dbReference>
<dbReference type="RNAct" id="Q9CX47">
    <property type="molecule type" value="protein"/>
</dbReference>
<dbReference type="Bgee" id="ENSMUSG00000028933">
    <property type="expression patterns" value="Expressed in spermatocyte and 192 other cell types or tissues"/>
</dbReference>
<dbReference type="ExpressionAtlas" id="Q9CX47">
    <property type="expression patterns" value="baseline and differential"/>
</dbReference>
<dbReference type="GO" id="GO:0005813">
    <property type="term" value="C:centrosome"/>
    <property type="evidence" value="ECO:0000250"/>
    <property type="project" value="UniProtKB"/>
</dbReference>
<dbReference type="GO" id="GO:0005654">
    <property type="term" value="C:nucleoplasm"/>
    <property type="evidence" value="ECO:0007669"/>
    <property type="project" value="Ensembl"/>
</dbReference>
<dbReference type="GO" id="GO:0033063">
    <property type="term" value="C:Rad51B-Rad51C-Rad51D-XRCC2 complex"/>
    <property type="evidence" value="ECO:0000250"/>
    <property type="project" value="UniProtKB"/>
</dbReference>
<dbReference type="GO" id="GO:0005657">
    <property type="term" value="C:replication fork"/>
    <property type="evidence" value="ECO:0000250"/>
    <property type="project" value="UniProtKB"/>
</dbReference>
<dbReference type="GO" id="GO:0005524">
    <property type="term" value="F:ATP binding"/>
    <property type="evidence" value="ECO:0007669"/>
    <property type="project" value="InterPro"/>
</dbReference>
<dbReference type="GO" id="GO:0140664">
    <property type="term" value="F:ATP-dependent DNA damage sensor activity"/>
    <property type="evidence" value="ECO:0007669"/>
    <property type="project" value="InterPro"/>
</dbReference>
<dbReference type="GO" id="GO:0000400">
    <property type="term" value="F:four-way junction DNA binding"/>
    <property type="evidence" value="ECO:0007669"/>
    <property type="project" value="Ensembl"/>
</dbReference>
<dbReference type="GO" id="GO:0007098">
    <property type="term" value="P:centrosome cycle"/>
    <property type="evidence" value="ECO:0000250"/>
    <property type="project" value="UniProtKB"/>
</dbReference>
<dbReference type="GO" id="GO:0006974">
    <property type="term" value="P:DNA damage response"/>
    <property type="evidence" value="ECO:0000315"/>
    <property type="project" value="MGI"/>
</dbReference>
<dbReference type="GO" id="GO:0042148">
    <property type="term" value="P:DNA strand invasion"/>
    <property type="evidence" value="ECO:0000250"/>
    <property type="project" value="UniProtKB"/>
</dbReference>
<dbReference type="GO" id="GO:0000724">
    <property type="term" value="P:double-strand break repair via homologous recombination"/>
    <property type="evidence" value="ECO:0000315"/>
    <property type="project" value="MGI"/>
</dbReference>
<dbReference type="GO" id="GO:0001701">
    <property type="term" value="P:in utero embryonic development"/>
    <property type="evidence" value="ECO:0000315"/>
    <property type="project" value="MGI"/>
</dbReference>
<dbReference type="GO" id="GO:0000278">
    <property type="term" value="P:mitotic cell cycle"/>
    <property type="evidence" value="ECO:0000250"/>
    <property type="project" value="UniProtKB"/>
</dbReference>
<dbReference type="GO" id="GO:0035264">
    <property type="term" value="P:multicellular organism growth"/>
    <property type="evidence" value="ECO:0000316"/>
    <property type="project" value="MGI"/>
</dbReference>
<dbReference type="GO" id="GO:0043524">
    <property type="term" value="P:negative regulation of neuron apoptotic process"/>
    <property type="evidence" value="ECO:0000316"/>
    <property type="project" value="MGI"/>
</dbReference>
<dbReference type="GO" id="GO:0022008">
    <property type="term" value="P:neurogenesis"/>
    <property type="evidence" value="ECO:0000315"/>
    <property type="project" value="MGI"/>
</dbReference>
<dbReference type="GO" id="GO:0050769">
    <property type="term" value="P:positive regulation of neurogenesis"/>
    <property type="evidence" value="ECO:0000315"/>
    <property type="project" value="MGI"/>
</dbReference>
<dbReference type="GO" id="GO:2000269">
    <property type="term" value="P:regulation of fibroblast apoptotic process"/>
    <property type="evidence" value="ECO:0000316"/>
    <property type="project" value="MGI"/>
</dbReference>
<dbReference type="GO" id="GO:0010332">
    <property type="term" value="P:response to gamma radiation"/>
    <property type="evidence" value="ECO:0000315"/>
    <property type="project" value="MGI"/>
</dbReference>
<dbReference type="GO" id="GO:0010165">
    <property type="term" value="P:response to X-ray"/>
    <property type="evidence" value="ECO:0000315"/>
    <property type="project" value="MGI"/>
</dbReference>
<dbReference type="GO" id="GO:0001756">
    <property type="term" value="P:somitogenesis"/>
    <property type="evidence" value="ECO:0000315"/>
    <property type="project" value="MGI"/>
</dbReference>
<dbReference type="CDD" id="cd19490">
    <property type="entry name" value="XRCC2"/>
    <property type="match status" value="1"/>
</dbReference>
<dbReference type="Gene3D" id="3.40.50.300">
    <property type="entry name" value="P-loop containing nucleotide triphosphate hydrolases"/>
    <property type="match status" value="1"/>
</dbReference>
<dbReference type="InterPro" id="IPR013632">
    <property type="entry name" value="DNA_recomb/repair_Rad51_C"/>
</dbReference>
<dbReference type="InterPro" id="IPR027417">
    <property type="entry name" value="P-loop_NTPase"/>
</dbReference>
<dbReference type="InterPro" id="IPR020588">
    <property type="entry name" value="RecA_ATP-bd"/>
</dbReference>
<dbReference type="InterPro" id="IPR030547">
    <property type="entry name" value="XRCC2"/>
</dbReference>
<dbReference type="PANTHER" id="PTHR46644">
    <property type="entry name" value="DNA REPAIR PROTEIN XRCC2"/>
    <property type="match status" value="1"/>
</dbReference>
<dbReference type="PANTHER" id="PTHR46644:SF2">
    <property type="entry name" value="DNA REPAIR PROTEIN XRCC2"/>
    <property type="match status" value="1"/>
</dbReference>
<dbReference type="Pfam" id="PF08423">
    <property type="entry name" value="Rad51"/>
    <property type="match status" value="1"/>
</dbReference>
<dbReference type="SUPFAM" id="SSF52540">
    <property type="entry name" value="P-loop containing nucleoside triphosphate hydrolases"/>
    <property type="match status" value="1"/>
</dbReference>
<dbReference type="PROSITE" id="PS50162">
    <property type="entry name" value="RECA_2"/>
    <property type="match status" value="1"/>
</dbReference>
<evidence type="ECO:0000250" key="1"/>
<evidence type="ECO:0000250" key="2">
    <source>
        <dbReference type="UniProtKB" id="O43543"/>
    </source>
</evidence>
<evidence type="ECO:0000269" key="3">
    <source>
    </source>
</evidence>
<evidence type="ECO:0000305" key="4"/>
<comment type="function">
    <text evidence="1">Involved in the homologous recombination repair (HRR) pathway of double-stranded DNA, thought to repair chromosomal fragmentation, translocations and deletions. Part of the RAD51 paralog protein complex BCDX2 which acts in the BRCA1-BRCA2-dependent HR pathway. Upon DNA damage, BCDX2 acts downstream of BRCA2 recruitment and upstream of RAD51 recruitment. BCDX2 binds predominantly to the intersection of the four duplex arms of the Holliday junction and to junction of replication forks. The BCDX2 complex was originally reported to bind single-stranded DNA, single-stranded gaps in duplex DNA and specifically to nicks in duplex DNA (By similarity).</text>
</comment>
<comment type="subunit">
    <text evidence="1">Interacts with RAD51D. Part of the BCDX2 complex consisting of RAD51B, RAD51C, RAD51D and XRCC2; the complex has a ring-like structure arranged into a flat disk around a central channel. In the absence of DNA, the BCDX2 subcomplex XRCC2:RAD51D formed a multimeric ring structure; in the presence of single-stranded DNA it formed a filamentous structure with the ssDNA (By similarity).</text>
</comment>
<comment type="subcellular location">
    <subcellularLocation>
        <location evidence="1">Nucleus</location>
    </subcellularLocation>
</comment>
<comment type="tissue specificity">
    <text>Expressed at low level in somatic tissues and at high level in testis.</text>
</comment>
<comment type="similarity">
    <text evidence="4">Belongs to the RecA family. RAD51 subfamily.</text>
</comment>
<reference key="1">
    <citation type="journal article" date="1998" name="Nucleic Acids Res.">
        <title>The XRCC2 DNA repair gene from human and mouse encodes a novel member of the recA/RAD51 family.</title>
        <authorList>
            <person name="Cartwright R."/>
            <person name="Tambini C.E."/>
            <person name="Simpson P.J."/>
            <person name="Thacker J."/>
        </authorList>
    </citation>
    <scope>NUCLEOTIDE SEQUENCE [MRNA]</scope>
    <source>
        <strain>L929</strain>
        <tissue>Testis</tissue>
    </source>
</reference>
<reference key="2">
    <citation type="journal article" date="2005" name="Science">
        <title>The transcriptional landscape of the mammalian genome.</title>
        <authorList>
            <person name="Carninci P."/>
            <person name="Kasukawa T."/>
            <person name="Katayama S."/>
            <person name="Gough J."/>
            <person name="Frith M.C."/>
            <person name="Maeda N."/>
            <person name="Oyama R."/>
            <person name="Ravasi T."/>
            <person name="Lenhard B."/>
            <person name="Wells C."/>
            <person name="Kodzius R."/>
            <person name="Shimokawa K."/>
            <person name="Bajic V.B."/>
            <person name="Brenner S.E."/>
            <person name="Batalov S."/>
            <person name="Forrest A.R."/>
            <person name="Zavolan M."/>
            <person name="Davis M.J."/>
            <person name="Wilming L.G."/>
            <person name="Aidinis V."/>
            <person name="Allen J.E."/>
            <person name="Ambesi-Impiombato A."/>
            <person name="Apweiler R."/>
            <person name="Aturaliya R.N."/>
            <person name="Bailey T.L."/>
            <person name="Bansal M."/>
            <person name="Baxter L."/>
            <person name="Beisel K.W."/>
            <person name="Bersano T."/>
            <person name="Bono H."/>
            <person name="Chalk A.M."/>
            <person name="Chiu K.P."/>
            <person name="Choudhary V."/>
            <person name="Christoffels A."/>
            <person name="Clutterbuck D.R."/>
            <person name="Crowe M.L."/>
            <person name="Dalla E."/>
            <person name="Dalrymple B.P."/>
            <person name="de Bono B."/>
            <person name="Della Gatta G."/>
            <person name="di Bernardo D."/>
            <person name="Down T."/>
            <person name="Engstrom P."/>
            <person name="Fagiolini M."/>
            <person name="Faulkner G."/>
            <person name="Fletcher C.F."/>
            <person name="Fukushima T."/>
            <person name="Furuno M."/>
            <person name="Futaki S."/>
            <person name="Gariboldi M."/>
            <person name="Georgii-Hemming P."/>
            <person name="Gingeras T.R."/>
            <person name="Gojobori T."/>
            <person name="Green R.E."/>
            <person name="Gustincich S."/>
            <person name="Harbers M."/>
            <person name="Hayashi Y."/>
            <person name="Hensch T.K."/>
            <person name="Hirokawa N."/>
            <person name="Hill D."/>
            <person name="Huminiecki L."/>
            <person name="Iacono M."/>
            <person name="Ikeo K."/>
            <person name="Iwama A."/>
            <person name="Ishikawa T."/>
            <person name="Jakt M."/>
            <person name="Kanapin A."/>
            <person name="Katoh M."/>
            <person name="Kawasawa Y."/>
            <person name="Kelso J."/>
            <person name="Kitamura H."/>
            <person name="Kitano H."/>
            <person name="Kollias G."/>
            <person name="Krishnan S.P."/>
            <person name="Kruger A."/>
            <person name="Kummerfeld S.K."/>
            <person name="Kurochkin I.V."/>
            <person name="Lareau L.F."/>
            <person name="Lazarevic D."/>
            <person name="Lipovich L."/>
            <person name="Liu J."/>
            <person name="Liuni S."/>
            <person name="McWilliam S."/>
            <person name="Madan Babu M."/>
            <person name="Madera M."/>
            <person name="Marchionni L."/>
            <person name="Matsuda H."/>
            <person name="Matsuzawa S."/>
            <person name="Miki H."/>
            <person name="Mignone F."/>
            <person name="Miyake S."/>
            <person name="Morris K."/>
            <person name="Mottagui-Tabar S."/>
            <person name="Mulder N."/>
            <person name="Nakano N."/>
            <person name="Nakauchi H."/>
            <person name="Ng P."/>
            <person name="Nilsson R."/>
            <person name="Nishiguchi S."/>
            <person name="Nishikawa S."/>
            <person name="Nori F."/>
            <person name="Ohara O."/>
            <person name="Okazaki Y."/>
            <person name="Orlando V."/>
            <person name="Pang K.C."/>
            <person name="Pavan W.J."/>
            <person name="Pavesi G."/>
            <person name="Pesole G."/>
            <person name="Petrovsky N."/>
            <person name="Piazza S."/>
            <person name="Reed J."/>
            <person name="Reid J.F."/>
            <person name="Ring B.Z."/>
            <person name="Ringwald M."/>
            <person name="Rost B."/>
            <person name="Ruan Y."/>
            <person name="Salzberg S.L."/>
            <person name="Sandelin A."/>
            <person name="Schneider C."/>
            <person name="Schoenbach C."/>
            <person name="Sekiguchi K."/>
            <person name="Semple C.A."/>
            <person name="Seno S."/>
            <person name="Sessa L."/>
            <person name="Sheng Y."/>
            <person name="Shibata Y."/>
            <person name="Shimada H."/>
            <person name="Shimada K."/>
            <person name="Silva D."/>
            <person name="Sinclair B."/>
            <person name="Sperling S."/>
            <person name="Stupka E."/>
            <person name="Sugiura K."/>
            <person name="Sultana R."/>
            <person name="Takenaka Y."/>
            <person name="Taki K."/>
            <person name="Tammoja K."/>
            <person name="Tan S.L."/>
            <person name="Tang S."/>
            <person name="Taylor M.S."/>
            <person name="Tegner J."/>
            <person name="Teichmann S.A."/>
            <person name="Ueda H.R."/>
            <person name="van Nimwegen E."/>
            <person name="Verardo R."/>
            <person name="Wei C.L."/>
            <person name="Yagi K."/>
            <person name="Yamanishi H."/>
            <person name="Zabarovsky E."/>
            <person name="Zhu S."/>
            <person name="Zimmer A."/>
            <person name="Hide W."/>
            <person name="Bult C."/>
            <person name="Grimmond S.M."/>
            <person name="Teasdale R.D."/>
            <person name="Liu E.T."/>
            <person name="Brusic V."/>
            <person name="Quackenbush J."/>
            <person name="Wahlestedt C."/>
            <person name="Mattick J.S."/>
            <person name="Hume D.A."/>
            <person name="Kai C."/>
            <person name="Sasaki D."/>
            <person name="Tomaru Y."/>
            <person name="Fukuda S."/>
            <person name="Kanamori-Katayama M."/>
            <person name="Suzuki M."/>
            <person name="Aoki J."/>
            <person name="Arakawa T."/>
            <person name="Iida J."/>
            <person name="Imamura K."/>
            <person name="Itoh M."/>
            <person name="Kato T."/>
            <person name="Kawaji H."/>
            <person name="Kawagashira N."/>
            <person name="Kawashima T."/>
            <person name="Kojima M."/>
            <person name="Kondo S."/>
            <person name="Konno H."/>
            <person name="Nakano K."/>
            <person name="Ninomiya N."/>
            <person name="Nishio T."/>
            <person name="Okada M."/>
            <person name="Plessy C."/>
            <person name="Shibata K."/>
            <person name="Shiraki T."/>
            <person name="Suzuki S."/>
            <person name="Tagami M."/>
            <person name="Waki K."/>
            <person name="Watahiki A."/>
            <person name="Okamura-Oho Y."/>
            <person name="Suzuki H."/>
            <person name="Kawai J."/>
            <person name="Hayashizaki Y."/>
        </authorList>
    </citation>
    <scope>NUCLEOTIDE SEQUENCE [LARGE SCALE MRNA]</scope>
    <source>
        <strain>C57BL/6J</strain>
        <tissue>Embryonic testis</tissue>
    </source>
</reference>
<reference key="3">
    <citation type="journal article" date="2004" name="Genome Res.">
        <title>The status, quality, and expansion of the NIH full-length cDNA project: the Mammalian Gene Collection (MGC).</title>
        <authorList>
            <consortium name="The MGC Project Team"/>
        </authorList>
    </citation>
    <scope>NUCLEOTIDE SEQUENCE [LARGE SCALE MRNA]</scope>
    <source>
        <tissue>Retina</tissue>
    </source>
</reference>
<reference key="4">
    <citation type="journal article" date="2018" name="J. Med. Genet.">
        <title>XRCC2 mutation causes meiotic arrest, azoospermia and infertility.</title>
        <authorList>
            <person name="Yang Y."/>
            <person name="Guo J."/>
            <person name="Dai L."/>
            <person name="Zhu Y."/>
            <person name="Hu H."/>
            <person name="Tan L."/>
            <person name="Chen W."/>
            <person name="Liang D."/>
            <person name="He J."/>
            <person name="Tu M."/>
            <person name="Wang K."/>
            <person name="Wu L."/>
        </authorList>
    </citation>
    <scope>MUTAGENESIS OF LEU-14</scope>
</reference>
<name>XRCC2_MOUSE</name>
<gene>
    <name type="primary">Xrcc2</name>
</gene>
<feature type="chain" id="PRO_0000122949" description="DNA repair protein XRCC2">
    <location>
        <begin position="1"/>
        <end position="278"/>
    </location>
</feature>
<feature type="modified residue" description="Phosphoserine" evidence="2">
    <location>
        <position position="10"/>
    </location>
</feature>
<feature type="mutagenesis site" description="Mutant male mice exhibit meiotic arrest, azoospermia and infertility. Females exhibit infertility or low reproductive capacity." evidence="3">
    <original>L</original>
    <variation>P</variation>
    <location>
        <position position="14"/>
    </location>
</feature>